<evidence type="ECO:0000255" key="1"/>
<evidence type="ECO:0000305" key="2"/>
<gene>
    <name type="ordered locus">AF_1577</name>
</gene>
<feature type="chain" id="PRO_0000128029" description="Uncharacterized protein AF_1577">
    <location>
        <begin position="1"/>
        <end position="146"/>
    </location>
</feature>
<feature type="transmembrane region" description="Helical" evidence="1">
    <location>
        <begin position="89"/>
        <end position="111"/>
    </location>
</feature>
<feature type="transmembrane region" description="Helical" evidence="1">
    <location>
        <begin position="121"/>
        <end position="143"/>
    </location>
</feature>
<dbReference type="EMBL" id="AE000782">
    <property type="protein sequence ID" value="AAB89679.1"/>
    <property type="molecule type" value="Genomic_DNA"/>
</dbReference>
<dbReference type="PIR" id="H69446">
    <property type="entry name" value="H69446"/>
</dbReference>
<dbReference type="STRING" id="224325.AF_1577"/>
<dbReference type="PaxDb" id="224325-AF_1577"/>
<dbReference type="EnsemblBacteria" id="AAB89679">
    <property type="protein sequence ID" value="AAB89679"/>
    <property type="gene ID" value="AF_1577"/>
</dbReference>
<dbReference type="KEGG" id="afu:AF_1577"/>
<dbReference type="HOGENOM" id="CLU_1773046_0_0_2"/>
<dbReference type="Proteomes" id="UP000002199">
    <property type="component" value="Chromosome"/>
</dbReference>
<dbReference type="GO" id="GO:0005886">
    <property type="term" value="C:plasma membrane"/>
    <property type="evidence" value="ECO:0007669"/>
    <property type="project" value="UniProtKB-SubCell"/>
</dbReference>
<protein>
    <recommendedName>
        <fullName>Uncharacterized protein AF_1577</fullName>
    </recommendedName>
</protein>
<name>Y1577_ARCFU</name>
<comment type="subcellular location">
    <subcellularLocation>
        <location evidence="2">Cell membrane</location>
        <topology evidence="2">Multi-pass membrane protein</topology>
    </subcellularLocation>
</comment>
<keyword id="KW-1003">Cell membrane</keyword>
<keyword id="KW-0472">Membrane</keyword>
<keyword id="KW-1185">Reference proteome</keyword>
<keyword id="KW-0812">Transmembrane</keyword>
<keyword id="KW-1133">Transmembrane helix</keyword>
<reference key="1">
    <citation type="journal article" date="1997" name="Nature">
        <title>The complete genome sequence of the hyperthermophilic, sulphate-reducing archaeon Archaeoglobus fulgidus.</title>
        <authorList>
            <person name="Klenk H.-P."/>
            <person name="Clayton R.A."/>
            <person name="Tomb J.-F."/>
            <person name="White O."/>
            <person name="Nelson K.E."/>
            <person name="Ketchum K.A."/>
            <person name="Dodson R.J."/>
            <person name="Gwinn M.L."/>
            <person name="Hickey E.K."/>
            <person name="Peterson J.D."/>
            <person name="Richardson D.L."/>
            <person name="Kerlavage A.R."/>
            <person name="Graham D.E."/>
            <person name="Kyrpides N.C."/>
            <person name="Fleischmann R.D."/>
            <person name="Quackenbush J."/>
            <person name="Lee N.H."/>
            <person name="Sutton G.G."/>
            <person name="Gill S.R."/>
            <person name="Kirkness E.F."/>
            <person name="Dougherty B.A."/>
            <person name="McKenney K."/>
            <person name="Adams M.D."/>
            <person name="Loftus B.J."/>
            <person name="Peterson S.N."/>
            <person name="Reich C.I."/>
            <person name="McNeil L.K."/>
            <person name="Badger J.H."/>
            <person name="Glodek A."/>
            <person name="Zhou L."/>
            <person name="Overbeek R."/>
            <person name="Gocayne J.D."/>
            <person name="Weidman J.F."/>
            <person name="McDonald L.A."/>
            <person name="Utterback T.R."/>
            <person name="Cotton M.D."/>
            <person name="Spriggs T."/>
            <person name="Artiach P."/>
            <person name="Kaine B.P."/>
            <person name="Sykes S.M."/>
            <person name="Sadow P.W."/>
            <person name="D'Andrea K.P."/>
            <person name="Bowman C."/>
            <person name="Fujii C."/>
            <person name="Garland S.A."/>
            <person name="Mason T.M."/>
            <person name="Olsen G.J."/>
            <person name="Fraser C.M."/>
            <person name="Smith H.O."/>
            <person name="Woese C.R."/>
            <person name="Venter J.C."/>
        </authorList>
    </citation>
    <scope>NUCLEOTIDE SEQUENCE [LARGE SCALE GENOMIC DNA]</scope>
    <source>
        <strain>ATCC 49558 / DSM 4304 / JCM 9628 / NBRC 100126 / VC-16</strain>
    </source>
</reference>
<accession>O28695</accession>
<organism>
    <name type="scientific">Archaeoglobus fulgidus (strain ATCC 49558 / DSM 4304 / JCM 9628 / NBRC 100126 / VC-16)</name>
    <dbReference type="NCBI Taxonomy" id="224325"/>
    <lineage>
        <taxon>Archaea</taxon>
        <taxon>Methanobacteriati</taxon>
        <taxon>Methanobacteriota</taxon>
        <taxon>Archaeoglobi</taxon>
        <taxon>Archaeoglobales</taxon>
        <taxon>Archaeoglobaceae</taxon>
        <taxon>Archaeoglobus</taxon>
    </lineage>
</organism>
<sequence>MAYYNHQNRILARGQIWNLIGETEGLDSGRRHPACAITISNYTLLLARILWEELPFLSHEQCFHTDIFICSVTSKHISVERMKEETVKAIEMVGKVLILVPLLASLVLLLYFNITGSSAEIGCGFCLGTVILAGIVLVGYSVVRSR</sequence>
<proteinExistence type="predicted"/>